<name>NLRP3_BOVIN</name>
<comment type="function">
    <text evidence="1 2">Sensor component of the NLRP3 inflammasome, which mediates inflammasome activation in response to defects in membrane integrity, leading to secretion of inflammatory cytokines IL1B and IL18 and pyroptosis. In response to pathogens and other damage-associated signals that affect the integrity of membranes, initiates the formation of the inflammasome polymeric complex composed of NLRP3, CASP1 and PYCARD/ASC. Recruitment of pro-caspase-1 (proCASP1) to the NLRP3 inflammasome promotes caspase-1 (CASP1) activation, which subsequently cleaves and activates inflammatory cytokines IL1B and IL18 and gasdermin-D (GSDMD), promoting cytokine secretion and pyroptosis. Activation of NLRP3 inflammasome is also required for HMGB1 secretion; stimulating inflammatory responses (By similarity). Under resting conditions, ADP-bound NLRP3 is autoinhibited (By similarity). NLRP3 activation stimuli include extracellular ATP, nigericin, reactive oxygen species, crystals of monosodium urate or cholesterol, amyloid-beta fibers, environmental or industrial particles and nanoparticles, such as asbestos, silica, aluminum salts, cytosolic dsRNA, etc. Almost all stimuli trigger intracellular K(+) efflux (By similarity). These stimuli lead to membrane perturbation and activation of NLRP3 (By similarity). Upon activation, NLRP3 is transported to microtubule organizing center (MTOC), where it is unlocked by NEK7, leading to its relocalization to dispersed trans-Golgi network (dTGN) vesicle membranes and formation of an active inflammasome complex. Associates with dTGN vesicle membranes by binding to phosphatidylinositol 4-phosphate (PtdIns4P). Shows ATPase activity (By similarity).</text>
</comment>
<comment type="function">
    <text evidence="1">Independently of inflammasome activation, regulates the differentiation of T helper 2 (Th2) cells and has a role in Th2 cell-dependent asthma and tumor growth. During Th2 differentiation, required for optimal IRF4 binding to IL4 promoter and for IRF4-dependent IL4 transcription. Binds to the consensus DNA sequence 5'-GRRGGNRGAG-3'. May also participate in the transcription of IL5, IL13, GATA3, CCR3, CCR4 and MAF.</text>
</comment>
<comment type="catalytic activity">
    <reaction evidence="1">
        <text>ATP + H2O = ADP + phosphate + H(+)</text>
        <dbReference type="Rhea" id="RHEA:13065"/>
        <dbReference type="ChEBI" id="CHEBI:15377"/>
        <dbReference type="ChEBI" id="CHEBI:15378"/>
        <dbReference type="ChEBI" id="CHEBI:30616"/>
        <dbReference type="ChEBI" id="CHEBI:43474"/>
        <dbReference type="ChEBI" id="CHEBI:456216"/>
    </reaction>
    <physiologicalReaction direction="left-to-right" evidence="1">
        <dbReference type="Rhea" id="RHEA:13066"/>
    </physiologicalReaction>
</comment>
<comment type="activity regulation">
    <text evidence="1 2">Under resting conditions, NLRP3 binds ADP and is autoinhibited (By similarity). Inactive NLRP3 forms homodecameric double-ring cages that hide pyrin domains within NACHT-LRR rings to avoid premature activation. NLRP3 activation stimuli include extracellular ATP, nigericin, reactive oxygen species, crystals of monosodium urate or cholesterol, amyloid-beta fibers, environmental or industrial particles and nanoparticles, such as asbestos, silica, aluminum salts, cytosolic dsRNA, etc. Almost all stimuli trigger intracellular K(+) efflux. These stimuli lead to membrane perturbations that induce activation of NLRP3. Upon activation, NLRP3 is transported to microtubule organizing center (MTOC), where it is unlocked by NEK7, leading to its relocalization to dispersed trans-Golgi network (dTGN) vesicle membranes and recruitment of PYCARD/ASC for the formation of an active inflammasome complex. NEK7-activated NLRP3 forms a disk-shaped inflammasome. NLRP3 and PYCARD/ASC interact via their respective pyrin domains; interaction initiates speck formation (nucleation) which greatly enhances further addition of soluble PYCARD/ASC molecules to the speck in a prion-like polymerization process (By similarity). Clustered PYCARD/ASC nucleates the formation of CASP1 filaments through the interaction of their respective CARD domains, acting as a platform for CASP1 polymerization and activation. Active CASP1 then processes IL1B and IL18 precursors, leading to the release of mature cytokines in the extracellular milieu and inflammatory response (By similarity). NLRP3 inflammasome assembly is inhibited by IRGM, which impedes NLRP3 oligomerization (By similarity). NLRP3 inflammasome is inhibited by cyclic AMP (cAMP), which directly binds NLRP3; inhibition is relieved by calcium-sensing receptor CASR, which inhibits production of cAMP (By similarity). Specifically inhibited by sulfonylurea MCC950 (also named CP-456,773, CRID3), a potent and specific small-molecule inhibitor of the NLRP3 inflammasome that acts by preventing ATP hydrolysis (By similarity).</text>
</comment>
<comment type="subunit">
    <text evidence="1 2">Sensor component of NLRP3 inflammasomes; inflammasomes are supramolecular complexes that assemble in the cytosol in response to pathogens and other damage-associated signals and play critical roles in innate immunity and inflammation. The core of NLRP3 inflammasomes consists of a signal sensor component (NLRP3), an adapter (PYCARD/ASC), which recruits an effector pro-inflammatory caspase (CASP1 and, possibly, CASP4 and CASP5). Homodecamer; inactive NLRP3 forms homodecameric double-ring cages that hide pyrin domains within NACHT-LRR rings to avoid premature activation. Interacts (via pyrin domain) with PYCARD/ASC (via pyrin domain); interaction is direct. Interacts (via LRR repeat domain) with NEK7 (via N-terminus); the interaction is required for the formation of the complex NLRP3:PYCARD, oligomerization of PYCARD/ASC and activation of CASP1 (By similarity). Interacts (via LRR repeat domain) with NR4A1/Nur77 (via N-terminus); the interaction is direct, requires activation of NR4A1 by its ligands NBRE-containing dsDNA and lipopolysaccharide, and stimulates the association of NLRP3 with NEK7 for non-canonical NLRP3 inflammasome activation (By similarity). Interacts with CARD8; leading to inhibit formation of the NLRP3 inflammasome. Interacts with MEFV; this interaction targets NLRP3 to degradation by autophagy, hence preventing excessive IL1B- and IL18-mediated inflammation (By similarity). Interacts with EIF2AK2/PKR; this interaction requires EIF2AK2 activity, is accompanied by EIF2AK2 autophosphorylation and promotes inflammasome assembly in response to specific stimuli (By similarity). Interacts with GBP5 (via DAPIN domain); this interaction promotes inflammasome assembly in response to microbial and soluble, but not crystalline, agents. Interacts with PML (isoform PML-1) (via the leucine-rich repeat (LRR) domain); PML-mediated increase in NLRP3 inflammasome activation does not depend upon this interaction. Interacts (via NACHT domain) with DHX33 (via DEAH box); NLRP3 activation in presence of cytosolic dsRNA is mediated by DHX33. Interacts (via NACHT and LRR domains) with ARRB2; this interaction is direct and inducible by polyunsaturated fatty acids (PUFAs). Interacts (via NACHT domain) with DDX3X under both LPS-primed and inflammasome-activating conditions. Interacts with IRF4 (via the LRR domain); this interaction is direct and is required for optimal IRF4 binding to IL4 promoter and efficient IL4 transactivation during differentiation of Th2 helper T-cells. Interacts with MAVS; promoting localization to mitochondria and activation of the NLRP3 inflammasome. Interacts with MARK4; promoting localization of NLRP3 to the microtubule organizing center (MTOC) (By similarity). Interacts with TRIM50; this interaction also promotes NLRP3 oligomerization and subsequent inflammasome activation (By similarity). Interacts with IRGM; preventing NLRP3 inflammasome assembly and promoting NLRP3 degradation (By similarity). Interacts (via KFERQ-like motifs) with HSPA8/HSC70; promoting NLRP3 degradation by the chaperone-mediated autophagy pathway (By similarity). Interacts (via NACHT and LLR domains) with ABHD8; this interaction is enhanced in the presence of NLRP3 inflammasome inducers, such as ATP, nigericin, silica, or alum. Interaction with ABHD8 leads the recruitment of ZDHHC12, hence facilitating NLRP3 palmitoylation and degradation by the chaperone-mediated autophagy pathway (CMA), therefore attenuating NLRP3 inflammasome activation (By similarity).</text>
</comment>
<comment type="subcellular location">
    <subcellularLocation>
        <location evidence="1">Cytoplasm</location>
        <location evidence="1">Cytosol</location>
    </subcellularLocation>
    <subcellularLocation>
        <location evidence="1">Inflammasome</location>
    </subcellularLocation>
    <subcellularLocation>
        <location evidence="1">Cytoplasm</location>
        <location evidence="1">Cytoskeleton</location>
        <location evidence="1">Microtubule organizing center</location>
    </subcellularLocation>
    <subcellularLocation>
        <location evidence="1">Golgi apparatus membrane</location>
    </subcellularLocation>
    <subcellularLocation>
        <location evidence="1">Endoplasmic reticulum</location>
    </subcellularLocation>
    <subcellularLocation>
        <location evidence="1">Mitochondrion</location>
    </subcellularLocation>
    <subcellularLocation>
        <location evidence="1">Secreted</location>
    </subcellularLocation>
    <subcellularLocation>
        <location evidence="1">Nucleus</location>
    </subcellularLocation>
    <text evidence="1">In macrophages, under resting conditions, mainly located in the cytosol and on membranes of various organelles, such as endoplasmic reticulum, mitochondria and Golgi: forms an inactive double-ring cage that is primarily localized on membranes. Upon activation, NLRP3 is transported to microtubule organizing center (MTOC), where it is unlocked by NEK7, leading to its relocalization to dispersed trans-Golgi network (dTGN) vesicle membranes for the formation of an active inflammasome complex. Recruited to dTGN vesicle membranes by binding to phosphatidylinositol 4-phosphate (PtdIns4P). After the induction of pyroptosis, inflammasome specks are released into the extracellular space where they can further promote IL1B processing and where they can be engulfed by macrophages. Phagocytosis induces lysosomal damage and inflammasome activation in the recipient cells. In the Th2 subset of CD4(+) helper T-cells, mainly located in the nucleus. Nuclear localization depends upon KPNA2. In the Th1 subset of CD4(+) helper T-cells, mainly cytoplasmic.</text>
</comment>
<comment type="domain">
    <text evidence="2">The pyrin domain (also called DAPIN domain or PYD) is involved in PYCARD/ASC-binding.</text>
</comment>
<comment type="domain">
    <text evidence="2">The FISNA domain is a critical mediator of NLRP3 conformational during NLRP3 activation. It becomes ordered in its key regions during activation to stabilize the active NACHT conformation and mediate most interactions in the NLRP3 disk.</text>
</comment>
<comment type="domain">
    <text evidence="1">The LRR domain mediates the interaction with IRF4, PML, NEK7 and NR4A1/Nur77.</text>
</comment>
<comment type="domain">
    <text evidence="2">The KFERQ-like motifs mediate binding to HSPA8/HSC70 following NLRP3 paylmitoylation by ZDHHC12.</text>
</comment>
<comment type="PTM">
    <text evidence="1 2">Phosphorylation at Ser-198 by MAPK8/JNK1 increases inflammasome activation by promoting deubiquitination by BRCC3 and NLRP3 homooligomerization. Phosphorylation at Ser-801 by CSNK1A1 prevents inflammasome activation by preventing NEK7 recruitment. Phosphorylation at Ser-5 in the pyrin domain inhibits homomultimerization of NLRP3 and activation of the NLRP3 inflammasome: dephosphorylation by protein phosphatase 2A (PP2A) promotes assembly of the NLRP3 inflammasome (By similarity). Phosphorylation at Ser-292 by PKD/PRKD1 promotes NLRP3 inflammasome assembly (By similarity). Phosphorylation by ERK1/MAPK3 promotes NLRP3 inflammasome assembly. Phosphorylation by BTK (at Tyr-131, Tyr-135 and Tyr-138) in the region that mediates binding to phosphatidylinositol phosphate, promotes relocalization of NLRP3 and assembly of the NLRP3 inflammasome. Phosphorylation at Tyr-856 inhibits NLRP3 inflammasome assembly: dephosphorylation by PTPN22 promotes inflammasome activation (By similarity). Phosphorylated by LATS1 and LATS2 at Ser-262 following palmitoylation by ZDHHC1, promoting its relocalization to the microtubule organizing center (MTOC), where NLRP3 is activated by NEK7, leading to inflammasome assembly and activation (By similarity).</text>
</comment>
<comment type="PTM">
    <text evidence="1 2">Ubiquitinated; undergoes both 'Lys-48'- and 'Lys-63'-linked polyubiquitination (By similarity). Ubiquitination does not lead to degradation, but inhibits inflammasome activation. Deubiquitination is catalyzed by BRCC3 and associated with NLRP3 activation and inflammasome assembly. This process can be induced by the activation of Toll-like receptors (by LPS), through a non-transcriptional pathway dependent on the mitochondrial production of reactive oxygen species, and by ATP (By similarity). Ubiquitinated by TRIM31 via 'Lys-48'-linked ubiquitination, leading to its degradation by the proteasome. Ubiquitinated at Lys-687 by the SCF(FBXL2) complex, leading to its degradation by the proteasome (By similarity). Ubiquitinated by TRIM35 via 'lys-48' and 'Lys-63'-linked ubiquitination leading to inhibition of NLRP3 inflammasome activation (By similarity). Undergoes 'Lys-27'-linked polyubiquitination by MARCHF5, leading to NLRP3-NEK7 complex formation and NLRP3 oligomerization (By similarity).</text>
</comment>
<comment type="PTM">
    <text evidence="2">Palmitoylation by ZDHHC12 promotes NLRP3 degradation by the chaperone-mediated autophagy pathway (CMA) and therefore limits NLRP3 inflammasome activation. Interaction with ZDHHC12, and hence NLRP3 palmitoylation, is greatly enhanced by ABHD8 (By similarity). Following palmitoylation, HSPA8/HSC70 recognizes and binds the KFERQ-like motifs on NLRP3 and promotes NLRP3 recruitment to lysosomes, where it is degraded via the chaperone-mediated autophagy pathway in a LAMP2-dependent process. Palmitoylation at Cys-832 and Cys-833 by ZDHHC5 enhances its binding to NEK7 leading to inflammasome assembly and activation. Palmitoylation at Cys-125 and Cys-953 by ZDHHC1 facilitates phosphorylation at Ser-262 by LATS1 and LATS2, promoting its relocalization to the microtubule organizing center (MTOC), where NLRP3 is activated by NEK7, leading to inflammasome assembly and activation. Depalmitoylated by ABHD17A.</text>
</comment>
<comment type="PTM">
    <text evidence="2">Degraded via selective autophagy following interaction with IRGM. IRGM promotes NLRP3 recruitment to autophagosome membranes, promoting its SQSTM1/p62-dependent autophagy-dependent degradation.</text>
</comment>
<comment type="similarity">
    <text evidence="6">Belongs to the NLRP family.</text>
</comment>
<sequence length="1031" mass="118137">MRMVSVRCKLARYLEDLEDIDFKKFKMHLEDYPSQKGCTSIPRGQTEKADHVDLATLMIDFNGEEKAWAMAKWIFAAINRRDLYEKAKREEPEWENANISVLSQEESLEEEWMGLLGYLSRISICRKKKDYCKKYRKYVRSKFQCIKDRNARLGESVNLNKRFTRLRLIKEHRSQQEREHELLAIGRTWAKIQDSPVSSVNLELLFDPEDQHSEPVHTVVFQGAAGIGKTILARKIMLDWASEKLYQDRFDYLFYIHCREVSLGTQRSLGDLIASCCPGPNPPIGKIVSKPSRILFLMDGFDELQGAFDEHTEALCTNWRKVERGDILLSSLIRKRLLPEASLLITTRPVALEKLQHLLGQARHVEILGFSEARRKEYFLKYFSDEQQAREAFRLIQENEILFTMCFIPLVCWIVCTGLKQQMDSGKSLARTSKTTTAVYIFFLSSLLQSQGGSQENHNSATLWGLCSLAADGIWNQKILFQECDLRNHGLQKADVSAFLRMNLFQKEVDCEKFYSFIHMTFQEFFAAMYYLLEEDNHGEMRNTPQACSKLPNRDVKVLLENYGKFEKGYLIFVVRFLFGLINQERTSYLEKKLSCKISQKIRLELLKWIEAKANAKTLQIEPSQLELFYCLYEMQEEDFVQRAMSHFPKIEIKLSTRMDHVVSSFCIENCRHVESLSLRLLHNSPKEEEEEEEVRHSHMDRSVLSDFEVAYSQGLVNYLTSSICRGIFSVLSNNWNLTELNLSGNTLGDPGMNVLCETLQQPGCNIRRLWLGQCCLSHQCCFNISSVLSNNQKLVELDLSHNALGDFGIRLLCVGLRHLFCNLKKLWLVSCCLTSASCEDLASVLSTNHSLTRLYLGENALGDSGVGILCEKVKNPHCNLQKLGLVNSGLTSGCCPALSSVLSTNQNLTHLYLQGNALGDMGVKLLCEGLLHRNCKLQVLELDNCSLTSHCCWDLSTLLTSNQSLRKLCLGNNDLGDLGVMLLCEVLKQQGCLLKSLRLCEMYFNYDTKRALETLQEEKPELTIVFEPSR</sequence>
<organism>
    <name type="scientific">Bos taurus</name>
    <name type="common">Bovine</name>
    <dbReference type="NCBI Taxonomy" id="9913"/>
    <lineage>
        <taxon>Eukaryota</taxon>
        <taxon>Metazoa</taxon>
        <taxon>Chordata</taxon>
        <taxon>Craniata</taxon>
        <taxon>Vertebrata</taxon>
        <taxon>Euteleostomi</taxon>
        <taxon>Mammalia</taxon>
        <taxon>Eutheria</taxon>
        <taxon>Laurasiatheria</taxon>
        <taxon>Artiodactyla</taxon>
        <taxon>Ruminantia</taxon>
        <taxon>Pecora</taxon>
        <taxon>Bovidae</taxon>
        <taxon>Bovinae</taxon>
        <taxon>Bos</taxon>
    </lineage>
</organism>
<keyword id="KW-0010">Activator</keyword>
<keyword id="KW-1008">Amyloidosis</keyword>
<keyword id="KW-0067">ATP-binding</keyword>
<keyword id="KW-0963">Cytoplasm</keyword>
<keyword id="KW-0206">Cytoskeleton</keyword>
<keyword id="KW-0256">Endoplasmic reticulum</keyword>
<keyword id="KW-0333">Golgi apparatus</keyword>
<keyword id="KW-0378">Hydrolase</keyword>
<keyword id="KW-0391">Immunity</keyword>
<keyword id="KW-1271">Inflammasome</keyword>
<keyword id="KW-0395">Inflammatory response</keyword>
<keyword id="KW-0399">Innate immunity</keyword>
<keyword id="KW-1017">Isopeptide bond</keyword>
<keyword id="KW-0433">Leucine-rich repeat</keyword>
<keyword id="KW-0449">Lipoprotein</keyword>
<keyword id="KW-0472">Membrane</keyword>
<keyword id="KW-0496">Mitochondrion</keyword>
<keyword id="KW-0547">Nucleotide-binding</keyword>
<keyword id="KW-0539">Nucleus</keyword>
<keyword id="KW-0564">Palmitate</keyword>
<keyword id="KW-0597">Phosphoprotein</keyword>
<keyword id="KW-1185">Reference proteome</keyword>
<keyword id="KW-0677">Repeat</keyword>
<keyword id="KW-0964">Secreted</keyword>
<keyword id="KW-0804">Transcription</keyword>
<keyword id="KW-0805">Transcription regulation</keyword>
<keyword id="KW-0832">Ubl conjugation</keyword>
<feature type="chain" id="PRO_0000387568" description="NACHT, LRR and PYD domains-containing protein 3">
    <location>
        <begin position="1"/>
        <end position="1031"/>
    </location>
</feature>
<feature type="domain" description="Pyrin" evidence="4">
    <location>
        <begin position="1"/>
        <end position="93"/>
    </location>
</feature>
<feature type="domain" description="FISNA" evidence="3">
    <location>
        <begin position="135"/>
        <end position="207"/>
    </location>
</feature>
<feature type="domain" description="NACHT" evidence="5">
    <location>
        <begin position="217"/>
        <end position="533"/>
    </location>
</feature>
<feature type="repeat" description="LRR 1">
    <location>
        <begin position="737"/>
        <end position="757"/>
    </location>
</feature>
<feature type="repeat" description="LRR 2">
    <location>
        <begin position="766"/>
        <end position="787"/>
    </location>
</feature>
<feature type="repeat" description="LRR 3">
    <location>
        <begin position="794"/>
        <end position="814"/>
    </location>
</feature>
<feature type="repeat" description="LRR 4">
    <location>
        <begin position="823"/>
        <end position="844"/>
    </location>
</feature>
<feature type="repeat" description="LRR 5">
    <location>
        <begin position="851"/>
        <end position="871"/>
    </location>
</feature>
<feature type="repeat" description="LRR 6">
    <location>
        <begin position="880"/>
        <end position="901"/>
    </location>
</feature>
<feature type="repeat" description="LRR 7">
    <location>
        <begin position="908"/>
        <end position="929"/>
    </location>
</feature>
<feature type="repeat" description="LRR 8">
    <location>
        <begin position="937"/>
        <end position="958"/>
    </location>
</feature>
<feature type="repeat" description="LRR 9">
    <location>
        <begin position="965"/>
        <end position="986"/>
    </location>
</feature>
<feature type="region of interest" description="Required for binding to phosphatidylinositol 4-phosphate (PtdIns4P)" evidence="1">
    <location>
        <begin position="126"/>
        <end position="129"/>
    </location>
</feature>
<feature type="short sequence motif" description="KFERQ-like motif 1" evidence="2">
    <location>
        <begin position="352"/>
        <end position="356"/>
    </location>
</feature>
<feature type="short sequence motif" description="KFERQ-like motif 2" evidence="2">
    <location>
        <begin position="601"/>
        <end position="605"/>
    </location>
</feature>
<feature type="short sequence motif" description="KFERQ-like motif 3" evidence="2">
    <location>
        <begin position="793"/>
        <end position="797"/>
    </location>
</feature>
<feature type="short sequence motif" description="KFERQ-like motif 4" evidence="2">
    <location>
        <begin position="986"/>
        <end position="990"/>
    </location>
</feature>
<feature type="binding site" evidence="2">
    <location>
        <position position="164"/>
    </location>
    <ligand>
        <name>ATP</name>
        <dbReference type="ChEBI" id="CHEBI:30616"/>
    </ligand>
</feature>
<feature type="binding site" evidence="5">
    <location>
        <begin position="223"/>
        <end position="230"/>
    </location>
    <ligand>
        <name>ATP</name>
        <dbReference type="ChEBI" id="CHEBI:30616"/>
    </ligand>
</feature>
<feature type="binding site" evidence="2">
    <location>
        <position position="519"/>
    </location>
    <ligand>
        <name>ATP</name>
        <dbReference type="ChEBI" id="CHEBI:30616"/>
    </ligand>
</feature>
<feature type="modified residue" description="Phosphoserine" evidence="1">
    <location>
        <position position="5"/>
    </location>
</feature>
<feature type="modified residue" description="Phosphotyrosine" evidence="2">
    <location>
        <position position="13"/>
    </location>
</feature>
<feature type="modified residue" description="Phosphotyrosine" evidence="2">
    <location>
        <position position="131"/>
    </location>
</feature>
<feature type="modified residue" description="Phosphotyrosine" evidence="2">
    <location>
        <position position="135"/>
    </location>
</feature>
<feature type="modified residue" description="Phosphotyrosine" evidence="2">
    <location>
        <position position="138"/>
    </location>
</feature>
<feature type="modified residue" description="Phosphoserine" evidence="1">
    <location>
        <position position="156"/>
    </location>
</feature>
<feature type="modified residue" description="Phosphoserine" evidence="2">
    <location>
        <position position="195"/>
    </location>
</feature>
<feature type="modified residue" description="Phosphoserine" evidence="2">
    <location>
        <position position="198"/>
    </location>
</feature>
<feature type="modified residue" description="Phosphoserine" evidence="2">
    <location>
        <position position="262"/>
    </location>
</feature>
<feature type="modified residue" description="Phosphoserine" evidence="1">
    <location>
        <position position="292"/>
    </location>
</feature>
<feature type="modified residue" description="Phosphoserine" evidence="2">
    <location>
        <position position="331"/>
    </location>
</feature>
<feature type="modified residue" description="Phosphoserine" evidence="2">
    <location>
        <position position="723"/>
    </location>
</feature>
<feature type="modified residue" description="Phosphoserine" evidence="2">
    <location>
        <position position="730"/>
    </location>
</feature>
<feature type="modified residue" description="Phosphoserine" evidence="2">
    <location>
        <position position="801"/>
    </location>
</feature>
<feature type="modified residue" description="Phosphotyrosine" evidence="2">
    <location>
        <position position="856"/>
    </location>
</feature>
<feature type="modified residue" description="Phosphoserine" evidence="2">
    <location>
        <position position="1030"/>
    </location>
</feature>
<feature type="lipid moiety-binding region" description="S-palmitoyl cysteine" evidence="2">
    <location>
        <position position="125"/>
    </location>
</feature>
<feature type="lipid moiety-binding region" description="S-palmitoyl cysteine" evidence="2">
    <location>
        <position position="832"/>
    </location>
</feature>
<feature type="lipid moiety-binding region" description="S-palmitoyl cysteine" evidence="2">
    <location>
        <position position="833"/>
    </location>
</feature>
<feature type="lipid moiety-binding region" description="S-palmitoyl cysteine" evidence="2">
    <location>
        <position position="839"/>
    </location>
</feature>
<feature type="lipid moiety-binding region" description="S-palmitoyl cysteine" evidence="2">
    <location>
        <position position="953"/>
    </location>
</feature>
<feature type="cross-link" description="Glycyl lysine isopeptide (Lys-Gly) (interchain with G-Cter in ubiquitin)" evidence="2">
    <location>
        <position position="321"/>
    </location>
</feature>
<feature type="cross-link" description="Glycyl lysine isopeptide (Lys-Gly) (interchain with G-Cter in ubiquitin)" evidence="2">
    <location>
        <position position="427"/>
    </location>
</feature>
<feature type="cross-link" description="Glycyl lysine isopeptide (Lys-Gly) (interchain with G-Cter in ubiquitin)" evidence="2">
    <location>
        <position position="687"/>
    </location>
</feature>
<feature type="cross-link" description="Glycyl lysine isopeptide (Lys-Gly) (interchain with G-Cter in ubiquitin)" evidence="2">
    <location>
        <position position="873"/>
    </location>
</feature>
<feature type="cross-link" description="Glycyl lysine isopeptide (Lys-Gly) (interchain with G-Cter in ubiquitin)" evidence="2">
    <location>
        <position position="968"/>
    </location>
</feature>
<gene>
    <name type="primary">NLRP3</name>
</gene>
<reference key="1">
    <citation type="submission" date="2007-06" db="EMBL/GenBank/DDBJ databases">
        <authorList>
            <consortium name="NIH - Mammalian Gene Collection (MGC) project"/>
        </authorList>
    </citation>
    <scope>NUCLEOTIDE SEQUENCE [LARGE SCALE MRNA]</scope>
    <source>
        <strain>Hereford</strain>
        <tissue>Basal ganglia</tissue>
    </source>
</reference>
<protein>
    <recommendedName>
        <fullName>NACHT, LRR and PYD domains-containing protein 3</fullName>
        <ecNumber evidence="2">3.6.4.-</ecNumber>
    </recommendedName>
</protein>
<evidence type="ECO:0000250" key="1">
    <source>
        <dbReference type="UniProtKB" id="Q8R4B8"/>
    </source>
</evidence>
<evidence type="ECO:0000250" key="2">
    <source>
        <dbReference type="UniProtKB" id="Q96P20"/>
    </source>
</evidence>
<evidence type="ECO:0000255" key="3"/>
<evidence type="ECO:0000255" key="4">
    <source>
        <dbReference type="PROSITE-ProRule" id="PRU00061"/>
    </source>
</evidence>
<evidence type="ECO:0000255" key="5">
    <source>
        <dbReference type="PROSITE-ProRule" id="PRU00136"/>
    </source>
</evidence>
<evidence type="ECO:0000305" key="6"/>
<dbReference type="EC" id="3.6.4.-" evidence="2"/>
<dbReference type="EMBL" id="BC147936">
    <property type="protein sequence ID" value="AAI47937.1"/>
    <property type="molecule type" value="mRNA"/>
</dbReference>
<dbReference type="RefSeq" id="NP_001095689.1">
    <property type="nucleotide sequence ID" value="NM_001102219.1"/>
</dbReference>
<dbReference type="RefSeq" id="XP_010805479.1">
    <property type="nucleotide sequence ID" value="XM_010807177.4"/>
</dbReference>
<dbReference type="RefSeq" id="XP_059744294.1">
    <property type="nucleotide sequence ID" value="XM_059888311.1"/>
</dbReference>
<dbReference type="SMR" id="A6QLE5"/>
<dbReference type="FunCoup" id="A6QLE5">
    <property type="interactions" value="591"/>
</dbReference>
<dbReference type="STRING" id="9913.ENSBTAP00000001675"/>
<dbReference type="PaxDb" id="9913-ENSBTAP00000001675"/>
<dbReference type="Ensembl" id="ENSBTAT00000001675.6">
    <property type="protein sequence ID" value="ENSBTAP00000001675.5"/>
    <property type="gene ID" value="ENSBTAG00000001273.7"/>
</dbReference>
<dbReference type="GeneID" id="538639"/>
<dbReference type="KEGG" id="bta:538639"/>
<dbReference type="CTD" id="114548"/>
<dbReference type="VEuPathDB" id="HostDB:ENSBTAG00000001273"/>
<dbReference type="VGNC" id="VGNC:32117">
    <property type="gene designation" value="NLRP3"/>
</dbReference>
<dbReference type="eggNOG" id="ENOG502SBIG">
    <property type="taxonomic scope" value="Eukaryota"/>
</dbReference>
<dbReference type="GeneTree" id="ENSGT00940000162415"/>
<dbReference type="HOGENOM" id="CLU_002274_2_0_1"/>
<dbReference type="InParanoid" id="A6QLE5"/>
<dbReference type="OMA" id="QRECEIA"/>
<dbReference type="OrthoDB" id="120976at2759"/>
<dbReference type="Reactome" id="R-BTA-5689901">
    <property type="pathway name" value="Metalloprotease DUBs"/>
</dbReference>
<dbReference type="Reactome" id="R-BTA-844456">
    <property type="pathway name" value="The NLRP3 inflammasome"/>
</dbReference>
<dbReference type="Proteomes" id="UP000009136">
    <property type="component" value="Chromosome 7"/>
</dbReference>
<dbReference type="Bgee" id="ENSBTAG00000001273">
    <property type="expression patterns" value="Expressed in neutrophil and 82 other cell types or tissues"/>
</dbReference>
<dbReference type="GO" id="GO:0005737">
    <property type="term" value="C:cytoplasm"/>
    <property type="evidence" value="ECO:0000250"/>
    <property type="project" value="UniProtKB"/>
</dbReference>
<dbReference type="GO" id="GO:0005783">
    <property type="term" value="C:endoplasmic reticulum"/>
    <property type="evidence" value="ECO:0007669"/>
    <property type="project" value="UniProtKB-SubCell"/>
</dbReference>
<dbReference type="GO" id="GO:0005576">
    <property type="term" value="C:extracellular region"/>
    <property type="evidence" value="ECO:0007669"/>
    <property type="project" value="UniProtKB-SubCell"/>
</dbReference>
<dbReference type="GO" id="GO:0000139">
    <property type="term" value="C:Golgi membrane"/>
    <property type="evidence" value="ECO:0007669"/>
    <property type="project" value="UniProtKB-SubCell"/>
</dbReference>
<dbReference type="GO" id="GO:0031021">
    <property type="term" value="C:interphase microtubule organizing center"/>
    <property type="evidence" value="ECO:0000250"/>
    <property type="project" value="UniProtKB"/>
</dbReference>
<dbReference type="GO" id="GO:0016020">
    <property type="term" value="C:membrane"/>
    <property type="evidence" value="ECO:0000250"/>
    <property type="project" value="UniProtKB"/>
</dbReference>
<dbReference type="GO" id="GO:0005739">
    <property type="term" value="C:mitochondrion"/>
    <property type="evidence" value="ECO:0007669"/>
    <property type="project" value="UniProtKB-SubCell"/>
</dbReference>
<dbReference type="GO" id="GO:0072559">
    <property type="term" value="C:NLRP3 inflammasome complex"/>
    <property type="evidence" value="ECO:0000250"/>
    <property type="project" value="UniProtKB"/>
</dbReference>
<dbReference type="GO" id="GO:0005634">
    <property type="term" value="C:nucleus"/>
    <property type="evidence" value="ECO:0000250"/>
    <property type="project" value="UniProtKB"/>
</dbReference>
<dbReference type="GO" id="GO:0043531">
    <property type="term" value="F:ADP binding"/>
    <property type="evidence" value="ECO:0000250"/>
    <property type="project" value="UniProtKB"/>
</dbReference>
<dbReference type="GO" id="GO:0005524">
    <property type="term" value="F:ATP binding"/>
    <property type="evidence" value="ECO:0000250"/>
    <property type="project" value="UniProtKB"/>
</dbReference>
<dbReference type="GO" id="GO:0016887">
    <property type="term" value="F:ATP hydrolysis activity"/>
    <property type="evidence" value="ECO:0000250"/>
    <property type="project" value="UniProtKB"/>
</dbReference>
<dbReference type="GO" id="GO:0140297">
    <property type="term" value="F:DNA-binding transcription factor binding"/>
    <property type="evidence" value="ECO:0000250"/>
    <property type="project" value="UniProtKB"/>
</dbReference>
<dbReference type="GO" id="GO:0140299">
    <property type="term" value="F:molecular sensor activity"/>
    <property type="evidence" value="ECO:0000250"/>
    <property type="project" value="UniProtKB"/>
</dbReference>
<dbReference type="GO" id="GO:1901981">
    <property type="term" value="F:phosphatidylinositol phosphate binding"/>
    <property type="evidence" value="ECO:0000250"/>
    <property type="project" value="UniProtKB"/>
</dbReference>
<dbReference type="GO" id="GO:0070273">
    <property type="term" value="F:phosphatidylinositol-4-phosphate binding"/>
    <property type="evidence" value="ECO:0000250"/>
    <property type="project" value="UniProtKB"/>
</dbReference>
<dbReference type="GO" id="GO:0043565">
    <property type="term" value="F:sequence-specific DNA binding"/>
    <property type="evidence" value="ECO:0000250"/>
    <property type="project" value="UniProtKB"/>
</dbReference>
<dbReference type="GO" id="GO:0035591">
    <property type="term" value="F:signaling adaptor activity"/>
    <property type="evidence" value="ECO:0000250"/>
    <property type="project" value="UniProtKB"/>
</dbReference>
<dbReference type="GO" id="GO:0009595">
    <property type="term" value="P:detection of biotic stimulus"/>
    <property type="evidence" value="ECO:0000250"/>
    <property type="project" value="UniProtKB"/>
</dbReference>
<dbReference type="GO" id="GO:0006954">
    <property type="term" value="P:inflammatory response"/>
    <property type="evidence" value="ECO:0000250"/>
    <property type="project" value="UniProtKB"/>
</dbReference>
<dbReference type="GO" id="GO:0045087">
    <property type="term" value="P:innate immune response"/>
    <property type="evidence" value="ECO:0007669"/>
    <property type="project" value="UniProtKB-KW"/>
</dbReference>
<dbReference type="GO" id="GO:1901223">
    <property type="term" value="P:negative regulation of non-canonical NF-kappaB signal transduction"/>
    <property type="evidence" value="ECO:0000318"/>
    <property type="project" value="GO_Central"/>
</dbReference>
<dbReference type="GO" id="GO:0044546">
    <property type="term" value="P:NLRP3 inflammasome complex assembly"/>
    <property type="evidence" value="ECO:0000250"/>
    <property type="project" value="UniProtKB"/>
</dbReference>
<dbReference type="GO" id="GO:0050729">
    <property type="term" value="P:positive regulation of inflammatory response"/>
    <property type="evidence" value="ECO:0000250"/>
    <property type="project" value="UniProtKB"/>
</dbReference>
<dbReference type="GO" id="GO:0032731">
    <property type="term" value="P:positive regulation of interleukin-1 beta production"/>
    <property type="evidence" value="ECO:0000250"/>
    <property type="project" value="UniProtKB"/>
</dbReference>
<dbReference type="GO" id="GO:0032753">
    <property type="term" value="P:positive regulation of interleukin-4 production"/>
    <property type="evidence" value="ECO:0000250"/>
    <property type="project" value="UniProtKB"/>
</dbReference>
<dbReference type="GO" id="GO:2000553">
    <property type="term" value="P:positive regulation of T-helper 2 cell cytokine production"/>
    <property type="evidence" value="ECO:0000250"/>
    <property type="project" value="UniProtKB"/>
</dbReference>
<dbReference type="GO" id="GO:0045630">
    <property type="term" value="P:positive regulation of T-helper 2 cell differentiation"/>
    <property type="evidence" value="ECO:0000250"/>
    <property type="project" value="UniProtKB"/>
</dbReference>
<dbReference type="GO" id="GO:0045944">
    <property type="term" value="P:positive regulation of transcription by RNA polymerase II"/>
    <property type="evidence" value="ECO:0000250"/>
    <property type="project" value="UniProtKB"/>
</dbReference>
<dbReference type="GO" id="GO:0002830">
    <property type="term" value="P:positive regulation of type 2 immune response"/>
    <property type="evidence" value="ECO:0000250"/>
    <property type="project" value="UniProtKB"/>
</dbReference>
<dbReference type="GO" id="GO:0051260">
    <property type="term" value="P:protein homooligomerization"/>
    <property type="evidence" value="ECO:0000250"/>
    <property type="project" value="UniProtKB"/>
</dbReference>
<dbReference type="GO" id="GO:0050727">
    <property type="term" value="P:regulation of inflammatory response"/>
    <property type="evidence" value="ECO:0000318"/>
    <property type="project" value="GO_Central"/>
</dbReference>
<dbReference type="CDD" id="cd00116">
    <property type="entry name" value="LRR_RI"/>
    <property type="match status" value="1"/>
</dbReference>
<dbReference type="CDD" id="cd08320">
    <property type="entry name" value="Pyrin_NALPs"/>
    <property type="match status" value="1"/>
</dbReference>
<dbReference type="FunFam" id="1.10.533.10:FF:000019">
    <property type="entry name" value="NACHT, LRR and PYD domains-containing protein 3"/>
    <property type="match status" value="1"/>
</dbReference>
<dbReference type="FunFam" id="3.80.10.10:FF:000360">
    <property type="entry name" value="NACHT, LRR and PYD domains-containing protein 3"/>
    <property type="match status" value="1"/>
</dbReference>
<dbReference type="Gene3D" id="1.10.533.10">
    <property type="entry name" value="Death Domain, Fas"/>
    <property type="match status" value="1"/>
</dbReference>
<dbReference type="Gene3D" id="3.40.50.300">
    <property type="entry name" value="P-loop containing nucleotide triphosphate hydrolases"/>
    <property type="match status" value="1"/>
</dbReference>
<dbReference type="Gene3D" id="3.80.10.10">
    <property type="entry name" value="Ribonuclease Inhibitor"/>
    <property type="match status" value="1"/>
</dbReference>
<dbReference type="InterPro" id="IPR004020">
    <property type="entry name" value="DAPIN"/>
</dbReference>
<dbReference type="InterPro" id="IPR011029">
    <property type="entry name" value="DEATH-like_dom_sf"/>
</dbReference>
<dbReference type="InterPro" id="IPR001611">
    <property type="entry name" value="Leu-rich_rpt"/>
</dbReference>
<dbReference type="InterPro" id="IPR032675">
    <property type="entry name" value="LRR_dom_sf"/>
</dbReference>
<dbReference type="InterPro" id="IPR029495">
    <property type="entry name" value="NACHT-assoc"/>
</dbReference>
<dbReference type="InterPro" id="IPR007111">
    <property type="entry name" value="NACHT_NTPase"/>
</dbReference>
<dbReference type="InterPro" id="IPR041267">
    <property type="entry name" value="NLRP_HD2"/>
</dbReference>
<dbReference type="InterPro" id="IPR050637">
    <property type="entry name" value="NLRP_innate_immun_reg"/>
</dbReference>
<dbReference type="InterPro" id="IPR041075">
    <property type="entry name" value="NOD1/2_WH"/>
</dbReference>
<dbReference type="InterPro" id="IPR027417">
    <property type="entry name" value="P-loop_NTPase"/>
</dbReference>
<dbReference type="PANTHER" id="PTHR45690">
    <property type="entry name" value="NACHT, LRR AND PYD DOMAINS-CONTAINING PROTEIN 12"/>
    <property type="match status" value="1"/>
</dbReference>
<dbReference type="PANTHER" id="PTHR45690:SF19">
    <property type="entry name" value="NACHT, LRR AND PYD DOMAINS-CONTAINING PROTEIN 3"/>
    <property type="match status" value="1"/>
</dbReference>
<dbReference type="Pfam" id="PF14484">
    <property type="entry name" value="FISNA"/>
    <property type="match status" value="1"/>
</dbReference>
<dbReference type="Pfam" id="PF13516">
    <property type="entry name" value="LRR_6"/>
    <property type="match status" value="5"/>
</dbReference>
<dbReference type="Pfam" id="PF05729">
    <property type="entry name" value="NACHT"/>
    <property type="match status" value="1"/>
</dbReference>
<dbReference type="Pfam" id="PF17776">
    <property type="entry name" value="NLRC4_HD2"/>
    <property type="match status" value="1"/>
</dbReference>
<dbReference type="Pfam" id="PF17779">
    <property type="entry name" value="NOD2_WH"/>
    <property type="match status" value="1"/>
</dbReference>
<dbReference type="Pfam" id="PF02758">
    <property type="entry name" value="PYRIN"/>
    <property type="match status" value="1"/>
</dbReference>
<dbReference type="SMART" id="SM01288">
    <property type="entry name" value="FISNA"/>
    <property type="match status" value="1"/>
</dbReference>
<dbReference type="SMART" id="SM00368">
    <property type="entry name" value="LRR_RI"/>
    <property type="match status" value="9"/>
</dbReference>
<dbReference type="SMART" id="SM01289">
    <property type="entry name" value="PYRIN"/>
    <property type="match status" value="1"/>
</dbReference>
<dbReference type="SUPFAM" id="SSF47986">
    <property type="entry name" value="DEATH domain"/>
    <property type="match status" value="1"/>
</dbReference>
<dbReference type="SUPFAM" id="SSF52540">
    <property type="entry name" value="P-loop containing nucleoside triphosphate hydrolases"/>
    <property type="match status" value="1"/>
</dbReference>
<dbReference type="SUPFAM" id="SSF52047">
    <property type="entry name" value="RNI-like"/>
    <property type="match status" value="1"/>
</dbReference>
<dbReference type="PROSITE" id="PS50824">
    <property type="entry name" value="DAPIN"/>
    <property type="match status" value="1"/>
</dbReference>
<dbReference type="PROSITE" id="PS50837">
    <property type="entry name" value="NACHT"/>
    <property type="match status" value="1"/>
</dbReference>
<accession>A6QLE5</accession>
<proteinExistence type="evidence at transcript level"/>